<accession>A7ZXS8</accession>
<comment type="function">
    <text evidence="1">Single strand-specific metallo-endoribonuclease involved in late-stage 70S ribosome quality control and in maturation of the 3' terminus of the 16S rRNA.</text>
</comment>
<comment type="cofactor">
    <cofactor evidence="1">
        <name>Zn(2+)</name>
        <dbReference type="ChEBI" id="CHEBI:29105"/>
    </cofactor>
    <text evidence="1">Binds 1 zinc ion.</text>
</comment>
<comment type="subcellular location">
    <subcellularLocation>
        <location evidence="1">Cytoplasm</location>
    </subcellularLocation>
</comment>
<comment type="similarity">
    <text evidence="1">Belongs to the endoribonuclease YbeY family.</text>
</comment>
<evidence type="ECO:0000255" key="1">
    <source>
        <dbReference type="HAMAP-Rule" id="MF_00009"/>
    </source>
</evidence>
<dbReference type="EC" id="3.1.-.-" evidence="1"/>
<dbReference type="EMBL" id="CP000802">
    <property type="protein sequence ID" value="ABV05082.1"/>
    <property type="molecule type" value="Genomic_DNA"/>
</dbReference>
<dbReference type="RefSeq" id="WP_000084469.1">
    <property type="nucleotide sequence ID" value="NC_009800.1"/>
</dbReference>
<dbReference type="SMR" id="A7ZXS8"/>
<dbReference type="GeneID" id="93776823"/>
<dbReference type="KEGG" id="ecx:EcHS_A0706"/>
<dbReference type="HOGENOM" id="CLU_106710_0_1_6"/>
<dbReference type="GO" id="GO:0005737">
    <property type="term" value="C:cytoplasm"/>
    <property type="evidence" value="ECO:0007669"/>
    <property type="project" value="UniProtKB-SubCell"/>
</dbReference>
<dbReference type="GO" id="GO:0004222">
    <property type="term" value="F:metalloendopeptidase activity"/>
    <property type="evidence" value="ECO:0007669"/>
    <property type="project" value="InterPro"/>
</dbReference>
<dbReference type="GO" id="GO:0004521">
    <property type="term" value="F:RNA endonuclease activity"/>
    <property type="evidence" value="ECO:0007669"/>
    <property type="project" value="UniProtKB-UniRule"/>
</dbReference>
<dbReference type="GO" id="GO:0008270">
    <property type="term" value="F:zinc ion binding"/>
    <property type="evidence" value="ECO:0007669"/>
    <property type="project" value="UniProtKB-UniRule"/>
</dbReference>
<dbReference type="GO" id="GO:0006364">
    <property type="term" value="P:rRNA processing"/>
    <property type="evidence" value="ECO:0007669"/>
    <property type="project" value="UniProtKB-UniRule"/>
</dbReference>
<dbReference type="FunFam" id="3.40.390.30:FF:000001">
    <property type="entry name" value="Endoribonuclease YbeY"/>
    <property type="match status" value="1"/>
</dbReference>
<dbReference type="Gene3D" id="3.40.390.30">
    <property type="entry name" value="Metalloproteases ('zincins'), catalytic domain"/>
    <property type="match status" value="1"/>
</dbReference>
<dbReference type="HAMAP" id="MF_00009">
    <property type="entry name" value="Endoribonucl_YbeY"/>
    <property type="match status" value="1"/>
</dbReference>
<dbReference type="InterPro" id="IPR023091">
    <property type="entry name" value="MetalPrtase_cat_dom_sf_prd"/>
</dbReference>
<dbReference type="InterPro" id="IPR002036">
    <property type="entry name" value="YbeY"/>
</dbReference>
<dbReference type="InterPro" id="IPR020549">
    <property type="entry name" value="YbeY_CS"/>
</dbReference>
<dbReference type="NCBIfam" id="TIGR00043">
    <property type="entry name" value="rRNA maturation RNase YbeY"/>
    <property type="match status" value="1"/>
</dbReference>
<dbReference type="PANTHER" id="PTHR46986">
    <property type="entry name" value="ENDORIBONUCLEASE YBEY, CHLOROPLASTIC"/>
    <property type="match status" value="1"/>
</dbReference>
<dbReference type="PANTHER" id="PTHR46986:SF1">
    <property type="entry name" value="ENDORIBONUCLEASE YBEY, CHLOROPLASTIC"/>
    <property type="match status" value="1"/>
</dbReference>
<dbReference type="Pfam" id="PF02130">
    <property type="entry name" value="YbeY"/>
    <property type="match status" value="1"/>
</dbReference>
<dbReference type="SUPFAM" id="SSF55486">
    <property type="entry name" value="Metalloproteases ('zincins'), catalytic domain"/>
    <property type="match status" value="1"/>
</dbReference>
<dbReference type="PROSITE" id="PS01306">
    <property type="entry name" value="UPF0054"/>
    <property type="match status" value="1"/>
</dbReference>
<feature type="chain" id="PRO_1000057069" description="Endoribonuclease YbeY">
    <location>
        <begin position="1"/>
        <end position="155"/>
    </location>
</feature>
<feature type="binding site" evidence="1">
    <location>
        <position position="114"/>
    </location>
    <ligand>
        <name>Zn(2+)</name>
        <dbReference type="ChEBI" id="CHEBI:29105"/>
        <note>catalytic</note>
    </ligand>
</feature>
<feature type="binding site" evidence="1">
    <location>
        <position position="118"/>
    </location>
    <ligand>
        <name>Zn(2+)</name>
        <dbReference type="ChEBI" id="CHEBI:29105"/>
        <note>catalytic</note>
    </ligand>
</feature>
<feature type="binding site" evidence="1">
    <location>
        <position position="124"/>
    </location>
    <ligand>
        <name>Zn(2+)</name>
        <dbReference type="ChEBI" id="CHEBI:29105"/>
        <note>catalytic</note>
    </ligand>
</feature>
<keyword id="KW-0963">Cytoplasm</keyword>
<keyword id="KW-0255">Endonuclease</keyword>
<keyword id="KW-0378">Hydrolase</keyword>
<keyword id="KW-0479">Metal-binding</keyword>
<keyword id="KW-0540">Nuclease</keyword>
<keyword id="KW-0690">Ribosome biogenesis</keyword>
<keyword id="KW-0698">rRNA processing</keyword>
<keyword id="KW-0862">Zinc</keyword>
<gene>
    <name evidence="1" type="primary">ybeY</name>
    <name type="ordered locus">EcHS_A0706</name>
</gene>
<name>YBEY_ECOHS</name>
<reference key="1">
    <citation type="journal article" date="2008" name="J. Bacteriol.">
        <title>The pangenome structure of Escherichia coli: comparative genomic analysis of E. coli commensal and pathogenic isolates.</title>
        <authorList>
            <person name="Rasko D.A."/>
            <person name="Rosovitz M.J."/>
            <person name="Myers G.S.A."/>
            <person name="Mongodin E.F."/>
            <person name="Fricke W.F."/>
            <person name="Gajer P."/>
            <person name="Crabtree J."/>
            <person name="Sebaihia M."/>
            <person name="Thomson N.R."/>
            <person name="Chaudhuri R."/>
            <person name="Henderson I.R."/>
            <person name="Sperandio V."/>
            <person name="Ravel J."/>
        </authorList>
    </citation>
    <scope>NUCLEOTIDE SEQUENCE [LARGE SCALE GENOMIC DNA]</scope>
    <source>
        <strain>HS</strain>
    </source>
</reference>
<organism>
    <name type="scientific">Escherichia coli O9:H4 (strain HS)</name>
    <dbReference type="NCBI Taxonomy" id="331112"/>
    <lineage>
        <taxon>Bacteria</taxon>
        <taxon>Pseudomonadati</taxon>
        <taxon>Pseudomonadota</taxon>
        <taxon>Gammaproteobacteria</taxon>
        <taxon>Enterobacterales</taxon>
        <taxon>Enterobacteriaceae</taxon>
        <taxon>Escherichia</taxon>
    </lineage>
</organism>
<proteinExistence type="inferred from homology"/>
<sequence length="155" mass="17526">MSQVILDLQLACEDNSGLPEESQFQTWLNAVIPQFQEESEVTIRVVDTAESHSLNLTYRGKDKPTNVLSFPFEVPPGMEMSLLGDLVICRQVVEKEAQEQGKPLEAHWAHMVVHGSLHLLGYDHIEDDEAEEMEALETEIMLALGYEDPYIAEKE</sequence>
<protein>
    <recommendedName>
        <fullName evidence="1">Endoribonuclease YbeY</fullName>
        <ecNumber evidence="1">3.1.-.-</ecNumber>
    </recommendedName>
</protein>